<evidence type="ECO:0000250" key="1">
    <source>
        <dbReference type="UniProtKB" id="P42697"/>
    </source>
</evidence>
<evidence type="ECO:0000255" key="2">
    <source>
        <dbReference type="PROSITE-ProRule" id="PRU00720"/>
    </source>
</evidence>
<evidence type="ECO:0000255" key="3">
    <source>
        <dbReference type="PROSITE-ProRule" id="PRU01055"/>
    </source>
</evidence>
<evidence type="ECO:0000256" key="4">
    <source>
        <dbReference type="SAM" id="MobiDB-lite"/>
    </source>
</evidence>
<evidence type="ECO:0000269" key="5">
    <source>
    </source>
</evidence>
<evidence type="ECO:0000269" key="6">
    <source>
    </source>
</evidence>
<evidence type="ECO:0000269" key="7">
    <source>
    </source>
</evidence>
<evidence type="ECO:0000269" key="8">
    <source>
    </source>
</evidence>
<evidence type="ECO:0000303" key="9">
    <source>
    </source>
</evidence>
<evidence type="ECO:0000303" key="10">
    <source>
    </source>
</evidence>
<evidence type="ECO:0000303" key="11">
    <source>
    </source>
</evidence>
<evidence type="ECO:0000303" key="12">
    <source>
    </source>
</evidence>
<evidence type="ECO:0000305" key="13"/>
<evidence type="ECO:0000312" key="14">
    <source>
        <dbReference type="Araport" id="AT1G14830"/>
    </source>
</evidence>
<evidence type="ECO:0000312" key="15">
    <source>
        <dbReference type="EMBL" id="AAF79238.1"/>
    </source>
</evidence>
<proteinExistence type="evidence at protein level"/>
<comment type="function">
    <text evidence="1 5 6 7">Microtubule-associated force-producing protein that is targeted to the growing edges of the cell plate during cytokinesis. Also plays a major role in plasma membrane maintenance during pollen maturation (PubMed:18344418). Has a GTPase activity (By similarity).</text>
</comment>
<comment type="catalytic activity">
    <reaction evidence="1">
        <text>GTP + H2O = GDP + phosphate + H(+)</text>
        <dbReference type="Rhea" id="RHEA:19669"/>
        <dbReference type="ChEBI" id="CHEBI:15377"/>
        <dbReference type="ChEBI" id="CHEBI:15378"/>
        <dbReference type="ChEBI" id="CHEBI:37565"/>
        <dbReference type="ChEBI" id="CHEBI:43474"/>
        <dbReference type="ChEBI" id="CHEBI:58189"/>
    </reaction>
</comment>
<comment type="subunit">
    <text evidence="6 8">Forms homodimer and may homooligomerize and heterooligomerize to form the phragmoplastin complex (PubMed:14750520). Binds to PHIP1 (PubMed:18621982).</text>
</comment>
<comment type="subcellular location">
    <subcellularLocation>
        <location evidence="6">Cytoplasm</location>
    </subcellularLocation>
    <subcellularLocation>
        <location evidence="6 7">Cytoplasm</location>
        <location evidence="6 7">Cytoskeleton</location>
    </subcellularLocation>
    <subcellularLocation>
        <location evidence="7">Cytoplasm</location>
        <location evidence="7">Cell cortex</location>
    </subcellularLocation>
    <subcellularLocation>
        <location evidence="7">Cytoplasmic vesicle</location>
        <location evidence="7">Clathrin-coated vesicle</location>
    </subcellularLocation>
    <subcellularLocation>
        <location evidence="6">Cytoplasm</location>
        <location evidence="6">Cytoskeleton</location>
        <location evidence="6">Phragmoplast</location>
    </subcellularLocation>
    <text evidence="6 7">Microtubule-associated and localized in the forming cell plate during cytokinesis (PubMed:14750520). Forms dynamic foci in the cell cortex, which colocalize with part of the clathrin endocytic machinery (PubMed:18344418).</text>
</comment>
<comment type="tissue specificity">
    <text evidence="5">Ubiquitous.</text>
</comment>
<comment type="similarity">
    <text evidence="3">Belongs to the TRAFAC class dynamin-like GTPase superfamily. Dynamin/Fzo/YdjA family.</text>
</comment>
<comment type="sequence caution" evidence="13">
    <conflict type="erroneous gene model prediction">
        <sequence resource="EMBL-CDS" id="AAF79238"/>
    </conflict>
</comment>
<comment type="sequence caution" evidence="13">
    <conflict type="erroneous initiation">
        <sequence resource="EMBL-CDS" id="AAL92170"/>
    </conflict>
    <text>Truncated N-terminus.</text>
</comment>
<gene>
    <name evidence="11 12" type="primary">DRP1C</name>
    <name evidence="9 10 11" type="synonym">ADL1C</name>
    <name evidence="11" type="synonym">ADL5</name>
    <name evidence="11" type="synonym">DLP1</name>
    <name evidence="14" type="ordered locus">At1g14830</name>
    <name evidence="15" type="ORF">F10B6.23</name>
</gene>
<accession>Q8LF21</accession>
<accession>Q8S3C8</accession>
<accession>Q9FNX6</accession>
<accession>Q9LQU8</accession>
<accession>Q9SE81</accession>
<keyword id="KW-0131">Cell cycle</keyword>
<keyword id="KW-0132">Cell division</keyword>
<keyword id="KW-0963">Cytoplasm</keyword>
<keyword id="KW-0968">Cytoplasmic vesicle</keyword>
<keyword id="KW-0206">Cytoskeleton</keyword>
<keyword id="KW-0342">GTP-binding</keyword>
<keyword id="KW-0378">Hydrolase</keyword>
<keyword id="KW-0493">Microtubule</keyword>
<keyword id="KW-0505">Motor protein</keyword>
<keyword id="KW-0547">Nucleotide-binding</keyword>
<keyword id="KW-1185">Reference proteome</keyword>
<reference key="1">
    <citation type="journal article" date="2001" name="Plant Physiol.">
        <title>The Arabidopsis cell plate-associated dynamin-like protein, ADL1Ap, is required for multiple stages of plant growth and development.</title>
        <authorList>
            <person name="Kang B.-H."/>
            <person name="Busse J.S."/>
            <person name="Dickey C."/>
            <person name="Rancour D.M."/>
            <person name="Bednarek S.Y."/>
        </authorList>
    </citation>
    <scope>NUCLEOTIDE SEQUENCE [MRNA]</scope>
</reference>
<reference key="2">
    <citation type="submission" date="2000-01" db="EMBL/GenBank/DDBJ databases">
        <title>Presence of multiple isoforms of dynamin-like proteins in Arabidopsis and their differential expression.</title>
        <authorList>
            <person name="Kang Y.N."/>
            <person name="Kim S.H."/>
            <person name="Hwang I."/>
        </authorList>
    </citation>
    <scope>NUCLEOTIDE SEQUENCE [MRNA]</scope>
</reference>
<reference key="3">
    <citation type="submission" date="2000-12" db="EMBL/GenBank/DDBJ databases">
        <title>Identification of a subgroup of closely related dynamin-like proteins in Arabidopsis thaliana.</title>
        <authorList>
            <person name="Jasper F."/>
            <person name="Menzel D."/>
        </authorList>
    </citation>
    <scope>NUCLEOTIDE SEQUENCE [MRNA]</scope>
    <source>
        <strain>cv. Landsberg erecta</strain>
        <tissue>Root</tissue>
    </source>
</reference>
<reference key="4">
    <citation type="journal article" date="2000" name="Nature">
        <title>Sequence and analysis of chromosome 1 of the plant Arabidopsis thaliana.</title>
        <authorList>
            <person name="Theologis A."/>
            <person name="Ecker J.R."/>
            <person name="Palm C.J."/>
            <person name="Federspiel N.A."/>
            <person name="Kaul S."/>
            <person name="White O."/>
            <person name="Alonso J."/>
            <person name="Altafi H."/>
            <person name="Araujo R."/>
            <person name="Bowman C.L."/>
            <person name="Brooks S.Y."/>
            <person name="Buehler E."/>
            <person name="Chan A."/>
            <person name="Chao Q."/>
            <person name="Chen H."/>
            <person name="Cheuk R.F."/>
            <person name="Chin C.W."/>
            <person name="Chung M.K."/>
            <person name="Conn L."/>
            <person name="Conway A.B."/>
            <person name="Conway A.R."/>
            <person name="Creasy T.H."/>
            <person name="Dewar K."/>
            <person name="Dunn P."/>
            <person name="Etgu P."/>
            <person name="Feldblyum T.V."/>
            <person name="Feng J.-D."/>
            <person name="Fong B."/>
            <person name="Fujii C.Y."/>
            <person name="Gill J.E."/>
            <person name="Goldsmith A.D."/>
            <person name="Haas B."/>
            <person name="Hansen N.F."/>
            <person name="Hughes B."/>
            <person name="Huizar L."/>
            <person name="Hunter J.L."/>
            <person name="Jenkins J."/>
            <person name="Johnson-Hopson C."/>
            <person name="Khan S."/>
            <person name="Khaykin E."/>
            <person name="Kim C.J."/>
            <person name="Koo H.L."/>
            <person name="Kremenetskaia I."/>
            <person name="Kurtz D.B."/>
            <person name="Kwan A."/>
            <person name="Lam B."/>
            <person name="Langin-Hooper S."/>
            <person name="Lee A."/>
            <person name="Lee J.M."/>
            <person name="Lenz C.A."/>
            <person name="Li J.H."/>
            <person name="Li Y.-P."/>
            <person name="Lin X."/>
            <person name="Liu S.X."/>
            <person name="Liu Z.A."/>
            <person name="Luros J.S."/>
            <person name="Maiti R."/>
            <person name="Marziali A."/>
            <person name="Militscher J."/>
            <person name="Miranda M."/>
            <person name="Nguyen M."/>
            <person name="Nierman W.C."/>
            <person name="Osborne B.I."/>
            <person name="Pai G."/>
            <person name="Peterson J."/>
            <person name="Pham P.K."/>
            <person name="Rizzo M."/>
            <person name="Rooney T."/>
            <person name="Rowley D."/>
            <person name="Sakano H."/>
            <person name="Salzberg S.L."/>
            <person name="Schwartz J.R."/>
            <person name="Shinn P."/>
            <person name="Southwick A.M."/>
            <person name="Sun H."/>
            <person name="Tallon L.J."/>
            <person name="Tambunga G."/>
            <person name="Toriumi M.J."/>
            <person name="Town C.D."/>
            <person name="Utterback T."/>
            <person name="Van Aken S."/>
            <person name="Vaysberg M."/>
            <person name="Vysotskaia V.S."/>
            <person name="Walker M."/>
            <person name="Wu D."/>
            <person name="Yu G."/>
            <person name="Fraser C.M."/>
            <person name="Venter J.C."/>
            <person name="Davis R.W."/>
        </authorList>
    </citation>
    <scope>NUCLEOTIDE SEQUENCE [LARGE SCALE GENOMIC DNA]</scope>
    <source>
        <strain>cv. Columbia</strain>
    </source>
</reference>
<reference key="5">
    <citation type="journal article" date="2017" name="Plant J.">
        <title>Araport11: a complete reannotation of the Arabidopsis thaliana reference genome.</title>
        <authorList>
            <person name="Cheng C.Y."/>
            <person name="Krishnakumar V."/>
            <person name="Chan A.P."/>
            <person name="Thibaud-Nissen F."/>
            <person name="Schobel S."/>
            <person name="Town C.D."/>
        </authorList>
    </citation>
    <scope>GENOME REANNOTATION</scope>
    <source>
        <strain>cv. Columbia</strain>
    </source>
</reference>
<reference key="6">
    <citation type="journal article" date="2003" name="Science">
        <title>Empirical analysis of transcriptional activity in the Arabidopsis genome.</title>
        <authorList>
            <person name="Yamada K."/>
            <person name="Lim J."/>
            <person name="Dale J.M."/>
            <person name="Chen H."/>
            <person name="Shinn P."/>
            <person name="Palm C.J."/>
            <person name="Southwick A.M."/>
            <person name="Wu H.C."/>
            <person name="Kim C.J."/>
            <person name="Nguyen M."/>
            <person name="Pham P.K."/>
            <person name="Cheuk R.F."/>
            <person name="Karlin-Newmann G."/>
            <person name="Liu S.X."/>
            <person name="Lam B."/>
            <person name="Sakano H."/>
            <person name="Wu T."/>
            <person name="Yu G."/>
            <person name="Miranda M."/>
            <person name="Quach H.L."/>
            <person name="Tripp M."/>
            <person name="Chang C.H."/>
            <person name="Lee J.M."/>
            <person name="Toriumi M.J."/>
            <person name="Chan M.M."/>
            <person name="Tang C.C."/>
            <person name="Onodera C.S."/>
            <person name="Deng J.M."/>
            <person name="Akiyama K."/>
            <person name="Ansari Y."/>
            <person name="Arakawa T."/>
            <person name="Banh J."/>
            <person name="Banno F."/>
            <person name="Bowser L."/>
            <person name="Brooks S.Y."/>
            <person name="Carninci P."/>
            <person name="Chao Q."/>
            <person name="Choy N."/>
            <person name="Enju A."/>
            <person name="Goldsmith A.D."/>
            <person name="Gurjal M."/>
            <person name="Hansen N.F."/>
            <person name="Hayashizaki Y."/>
            <person name="Johnson-Hopson C."/>
            <person name="Hsuan V.W."/>
            <person name="Iida K."/>
            <person name="Karnes M."/>
            <person name="Khan S."/>
            <person name="Koesema E."/>
            <person name="Ishida J."/>
            <person name="Jiang P.X."/>
            <person name="Jones T."/>
            <person name="Kawai J."/>
            <person name="Kamiya A."/>
            <person name="Meyers C."/>
            <person name="Nakajima M."/>
            <person name="Narusaka M."/>
            <person name="Seki M."/>
            <person name="Sakurai T."/>
            <person name="Satou M."/>
            <person name="Tamse R."/>
            <person name="Vaysberg M."/>
            <person name="Wallender E.K."/>
            <person name="Wong C."/>
            <person name="Yamamura Y."/>
            <person name="Yuan S."/>
            <person name="Shinozaki K."/>
            <person name="Davis R.W."/>
            <person name="Theologis A."/>
            <person name="Ecker J.R."/>
        </authorList>
    </citation>
    <scope>NUCLEOTIDE SEQUENCE [LARGE SCALE MRNA]</scope>
    <source>
        <strain>cv. Columbia</strain>
    </source>
</reference>
<reference key="7">
    <citation type="submission" date="2002-03" db="EMBL/GenBank/DDBJ databases">
        <title>Full-length cDNA from Arabidopsis thaliana.</title>
        <authorList>
            <person name="Brover V.V."/>
            <person name="Troukhan M.E."/>
            <person name="Alexandrov N.A."/>
            <person name="Lu Y.-P."/>
            <person name="Flavell R.B."/>
            <person name="Feldmann K.A."/>
        </authorList>
    </citation>
    <scope>NUCLEOTIDE SEQUENCE [LARGE SCALE MRNA]</scope>
</reference>
<reference key="8">
    <citation type="journal article" date="2003" name="Plant J.">
        <title>The dynamin-like protein ADL1C is essential for plasma membrane maintenance during pollen maturation.</title>
        <authorList>
            <person name="Kang B.-H."/>
            <person name="Rancour D.M."/>
            <person name="Bednarek S.Y."/>
        </authorList>
    </citation>
    <scope>FUNCTION</scope>
    <scope>TISSUE SPECIFICITY</scope>
</reference>
<reference key="9">
    <citation type="journal article" date="2003" name="Plant Mol. Biol.">
        <title>A unified nomenclature for Arabidopsis dynamin-related large GTPases based on homology and possible functions.</title>
        <authorList>
            <person name="Hong Z."/>
            <person name="Bednarek S.Y."/>
            <person name="Blumwald E."/>
            <person name="Hwang I."/>
            <person name="Jurgens G."/>
            <person name="Menzel D."/>
            <person name="Osteryoung K.W."/>
            <person name="Raikhel N.V."/>
            <person name="Shinozaki K."/>
            <person name="Tsutsumi N."/>
            <person name="Verma D.P.S."/>
        </authorList>
    </citation>
    <scope>GENE FAMILY</scope>
    <scope>NOMENCLATURE</scope>
</reference>
<reference key="10">
    <citation type="journal article" date="2003" name="Plant Mol. Biol.">
        <title>Phragmoplastin dynamics: multiple forms, microtubule association and their roles in cell plate formation in plants.</title>
        <authorList>
            <person name="Hong Z."/>
            <person name="Geisler-Lee C.J."/>
            <person name="Zhang Z."/>
            <person name="Verma D.P.S."/>
        </authorList>
    </citation>
    <scope>FUNCTION</scope>
    <scope>SUBUNIT</scope>
    <scope>SUBCELLULAR LOCATION</scope>
</reference>
<reference key="11">
    <citation type="journal article" date="2007" name="Mol. Cell. Proteomics">
        <title>Multidimensional protein identification technology (MudPIT) analysis of ubiquitinated proteins in plants.</title>
        <authorList>
            <person name="Maor R."/>
            <person name="Jones A."/>
            <person name="Nuehse T.S."/>
            <person name="Studholme D.J."/>
            <person name="Peck S.C."/>
            <person name="Shirasu K."/>
        </authorList>
    </citation>
    <scope>IDENTIFICATION BY MASS SPECTROMETRY [LARGE SCALE ANALYSIS]</scope>
    <source>
        <strain>cv. Landsberg erecta</strain>
    </source>
</reference>
<reference key="12">
    <citation type="journal article" date="2008" name="Plant Physiol.">
        <title>Comparison of the dynamics and functional redundancy of the Arabidopsis dynamin-related isoforms DRP1A and DRP1C during plant development.</title>
        <authorList>
            <person name="Konopka C.A."/>
            <person name="Bednarek S.Y."/>
        </authorList>
    </citation>
    <scope>FUNCTION</scope>
    <scope>SUBCELLULAR LOCATION</scope>
</reference>
<reference key="13">
    <citation type="journal article" date="2008" name="Plant Physiol.">
        <title>A novel RNA-binding protein associated with cell plate formation.</title>
        <authorList>
            <person name="Ma L."/>
            <person name="Xie B."/>
            <person name="Hong Z."/>
            <person name="Verma D.P.S."/>
            <person name="Zhang Z."/>
        </authorList>
    </citation>
    <scope>INTERACTION WITH PHIP1</scope>
</reference>
<name>DRP1C_ARATH</name>
<organism>
    <name type="scientific">Arabidopsis thaliana</name>
    <name type="common">Mouse-ear cress</name>
    <dbReference type="NCBI Taxonomy" id="3702"/>
    <lineage>
        <taxon>Eukaryota</taxon>
        <taxon>Viridiplantae</taxon>
        <taxon>Streptophyta</taxon>
        <taxon>Embryophyta</taxon>
        <taxon>Tracheophyta</taxon>
        <taxon>Spermatophyta</taxon>
        <taxon>Magnoliopsida</taxon>
        <taxon>eudicotyledons</taxon>
        <taxon>Gunneridae</taxon>
        <taxon>Pentapetalae</taxon>
        <taxon>rosids</taxon>
        <taxon>malvids</taxon>
        <taxon>Brassicales</taxon>
        <taxon>Brassicaceae</taxon>
        <taxon>Camelineae</taxon>
        <taxon>Arabidopsis</taxon>
    </lineage>
</organism>
<protein>
    <recommendedName>
        <fullName evidence="13">Phragmoplastin DRP1C</fullName>
        <ecNumber evidence="1">3.6.5.-</ecNumber>
    </recommendedName>
    <alternativeName>
        <fullName evidence="9 10 11">Dynamin-like protein 1C</fullName>
    </alternativeName>
    <alternativeName>
        <fullName evidence="11">Dynamin-like protein 5</fullName>
    </alternativeName>
    <alternativeName>
        <fullName evidence="11">Dynamin-like protein DLP1</fullName>
    </alternativeName>
    <alternativeName>
        <fullName evidence="11 12">Dynamin-related protein 1C</fullName>
        <shortName evidence="11 12">AtDRP1C</shortName>
    </alternativeName>
</protein>
<feature type="chain" id="PRO_0000206579" description="Phragmoplastin DRP1C">
    <location>
        <begin position="1"/>
        <end position="614"/>
    </location>
</feature>
<feature type="domain" description="Dynamin-type G" evidence="3">
    <location>
        <begin position="32"/>
        <end position="301"/>
    </location>
</feature>
<feature type="domain" description="GED" evidence="2">
    <location>
        <begin position="523"/>
        <end position="614"/>
    </location>
</feature>
<feature type="region of interest" description="G1 motif" evidence="3">
    <location>
        <begin position="42"/>
        <end position="49"/>
    </location>
</feature>
<feature type="region of interest" description="G2 motif" evidence="3">
    <location>
        <begin position="68"/>
        <end position="70"/>
    </location>
</feature>
<feature type="region of interest" description="G3 motif" evidence="3">
    <location>
        <begin position="143"/>
        <end position="146"/>
    </location>
</feature>
<feature type="region of interest" description="G4 motif" evidence="3">
    <location>
        <begin position="212"/>
        <end position="215"/>
    </location>
</feature>
<feature type="region of interest" description="G5 motif" evidence="3">
    <location>
        <begin position="242"/>
        <end position="245"/>
    </location>
</feature>
<feature type="region of interest" description="Disordered" evidence="4">
    <location>
        <begin position="499"/>
        <end position="519"/>
    </location>
</feature>
<feature type="compositionally biased region" description="Low complexity" evidence="4">
    <location>
        <begin position="507"/>
        <end position="517"/>
    </location>
</feature>
<feature type="binding site" evidence="1">
    <location>
        <begin position="45"/>
        <end position="50"/>
    </location>
    <ligand>
        <name>GTP</name>
        <dbReference type="ChEBI" id="CHEBI:37565"/>
    </ligand>
</feature>
<feature type="binding site" evidence="1">
    <location>
        <begin position="213"/>
        <end position="218"/>
    </location>
    <ligand>
        <name>GTP</name>
        <dbReference type="ChEBI" id="CHEBI:37565"/>
    </ligand>
</feature>
<feature type="binding site" evidence="1">
    <location>
        <begin position="243"/>
        <end position="246"/>
    </location>
    <ligand>
        <name>GTP</name>
        <dbReference type="ChEBI" id="CHEBI:37565"/>
    </ligand>
</feature>
<feature type="sequence conflict" description="In Ref. 1; AAL92170 and 2; AAF22293." evidence="13" ref="1 2">
    <original>D</original>
    <variation>H</variation>
    <location>
        <position position="23"/>
    </location>
</feature>
<dbReference type="EC" id="3.6.5.-" evidence="1"/>
<dbReference type="EMBL" id="AF488808">
    <property type="protein sequence ID" value="AAL92170.1"/>
    <property type="status" value="ALT_INIT"/>
    <property type="molecule type" value="mRNA"/>
</dbReference>
<dbReference type="EMBL" id="AF180734">
    <property type="protein sequence ID" value="AAF22293.1"/>
    <property type="molecule type" value="mRNA"/>
</dbReference>
<dbReference type="EMBL" id="AJ304841">
    <property type="protein sequence ID" value="CAC19656.1"/>
    <property type="molecule type" value="mRNA"/>
</dbReference>
<dbReference type="EMBL" id="AC006917">
    <property type="protein sequence ID" value="AAF79238.1"/>
    <property type="status" value="ALT_SEQ"/>
    <property type="molecule type" value="Genomic_DNA"/>
</dbReference>
<dbReference type="EMBL" id="CP002684">
    <property type="protein sequence ID" value="AEE29232.1"/>
    <property type="molecule type" value="Genomic_DNA"/>
</dbReference>
<dbReference type="EMBL" id="AY039955">
    <property type="protein sequence ID" value="AAK64059.1"/>
    <property type="molecule type" value="mRNA"/>
</dbReference>
<dbReference type="EMBL" id="AY150494">
    <property type="protein sequence ID" value="AAN12911.1"/>
    <property type="molecule type" value="mRNA"/>
</dbReference>
<dbReference type="EMBL" id="AY085091">
    <property type="protein sequence ID" value="AAM61645.1"/>
    <property type="molecule type" value="mRNA"/>
</dbReference>
<dbReference type="RefSeq" id="NP_172936.1">
    <property type="nucleotide sequence ID" value="NM_101352.3"/>
</dbReference>
<dbReference type="SMR" id="Q8LF21"/>
<dbReference type="BioGRID" id="23288">
    <property type="interactions" value="11"/>
</dbReference>
<dbReference type="FunCoup" id="Q8LF21">
    <property type="interactions" value="2597"/>
</dbReference>
<dbReference type="IntAct" id="Q8LF21">
    <property type="interactions" value="8"/>
</dbReference>
<dbReference type="STRING" id="3702.Q8LF21"/>
<dbReference type="SwissPalm" id="Q8LF21"/>
<dbReference type="PaxDb" id="3702-AT1G14830.1"/>
<dbReference type="ProteomicsDB" id="224361"/>
<dbReference type="EnsemblPlants" id="AT1G14830.1">
    <property type="protein sequence ID" value="AT1G14830.1"/>
    <property type="gene ID" value="AT1G14830"/>
</dbReference>
<dbReference type="GeneID" id="838048"/>
<dbReference type="Gramene" id="AT1G14830.1">
    <property type="protein sequence ID" value="AT1G14830.1"/>
    <property type="gene ID" value="AT1G14830"/>
</dbReference>
<dbReference type="KEGG" id="ath:AT1G14830"/>
<dbReference type="Araport" id="AT1G14830"/>
<dbReference type="TAIR" id="AT1G14830">
    <property type="gene designation" value="DL1C"/>
</dbReference>
<dbReference type="eggNOG" id="KOG0446">
    <property type="taxonomic scope" value="Eukaryota"/>
</dbReference>
<dbReference type="HOGENOM" id="CLU_008964_5_3_1"/>
<dbReference type="InParanoid" id="Q8LF21"/>
<dbReference type="OMA" id="GHLAHRM"/>
<dbReference type="OrthoDB" id="5061070at2759"/>
<dbReference type="PhylomeDB" id="Q8LF21"/>
<dbReference type="CD-CODE" id="4299E36E">
    <property type="entry name" value="Nucleolus"/>
</dbReference>
<dbReference type="PRO" id="PR:Q8LF21"/>
<dbReference type="Proteomes" id="UP000006548">
    <property type="component" value="Chromosome 1"/>
</dbReference>
<dbReference type="ExpressionAtlas" id="Q8LF21">
    <property type="expression patterns" value="baseline and differential"/>
</dbReference>
<dbReference type="GO" id="GO:0005938">
    <property type="term" value="C:cell cortex"/>
    <property type="evidence" value="ECO:0000314"/>
    <property type="project" value="TAIR"/>
</dbReference>
<dbReference type="GO" id="GO:0009504">
    <property type="term" value="C:cell plate"/>
    <property type="evidence" value="ECO:0000314"/>
    <property type="project" value="TAIR"/>
</dbReference>
<dbReference type="GO" id="GO:0030136">
    <property type="term" value="C:clathrin-coated vesicle"/>
    <property type="evidence" value="ECO:0000314"/>
    <property type="project" value="UniProtKB"/>
</dbReference>
<dbReference type="GO" id="GO:0005737">
    <property type="term" value="C:cytoplasm"/>
    <property type="evidence" value="ECO:0000314"/>
    <property type="project" value="TAIR"/>
</dbReference>
<dbReference type="GO" id="GO:0005576">
    <property type="term" value="C:extracellular region"/>
    <property type="evidence" value="ECO:0007005"/>
    <property type="project" value="TAIR"/>
</dbReference>
<dbReference type="GO" id="GO:0005874">
    <property type="term" value="C:microtubule"/>
    <property type="evidence" value="ECO:0007669"/>
    <property type="project" value="UniProtKB-KW"/>
</dbReference>
<dbReference type="GO" id="GO:0009524">
    <property type="term" value="C:phragmoplast"/>
    <property type="evidence" value="ECO:0007669"/>
    <property type="project" value="UniProtKB-SubCell"/>
</dbReference>
<dbReference type="GO" id="GO:0005886">
    <property type="term" value="C:plasma membrane"/>
    <property type="evidence" value="ECO:0000314"/>
    <property type="project" value="TAIR"/>
</dbReference>
<dbReference type="GO" id="GO:0009506">
    <property type="term" value="C:plasmodesma"/>
    <property type="evidence" value="ECO:0007005"/>
    <property type="project" value="TAIR"/>
</dbReference>
<dbReference type="GO" id="GO:0005525">
    <property type="term" value="F:GTP binding"/>
    <property type="evidence" value="ECO:0007669"/>
    <property type="project" value="UniProtKB-KW"/>
</dbReference>
<dbReference type="GO" id="GO:0003924">
    <property type="term" value="F:GTPase activity"/>
    <property type="evidence" value="ECO:0007669"/>
    <property type="project" value="InterPro"/>
</dbReference>
<dbReference type="GO" id="GO:0051301">
    <property type="term" value="P:cell division"/>
    <property type="evidence" value="ECO:0007669"/>
    <property type="project" value="UniProtKB-KW"/>
</dbReference>
<dbReference type="GO" id="GO:0000266">
    <property type="term" value="P:mitochondrial fission"/>
    <property type="evidence" value="ECO:0000315"/>
    <property type="project" value="TAIR"/>
</dbReference>
<dbReference type="GO" id="GO:0007005">
    <property type="term" value="P:mitochondrion organization"/>
    <property type="evidence" value="ECO:0000315"/>
    <property type="project" value="TAIR"/>
</dbReference>
<dbReference type="GO" id="GO:0010152">
    <property type="term" value="P:pollen maturation"/>
    <property type="evidence" value="ECO:0000315"/>
    <property type="project" value="UniProtKB"/>
</dbReference>
<dbReference type="CDD" id="cd08771">
    <property type="entry name" value="DLP_1"/>
    <property type="match status" value="1"/>
</dbReference>
<dbReference type="FunFam" id="1.20.120.1240:FF:000009">
    <property type="entry name" value="Dynamin-related protein 1C"/>
    <property type="match status" value="1"/>
</dbReference>
<dbReference type="FunFam" id="3.40.50.300:FF:000228">
    <property type="entry name" value="dynamin-related protein 1E"/>
    <property type="match status" value="1"/>
</dbReference>
<dbReference type="Gene3D" id="1.20.120.1240">
    <property type="entry name" value="Dynamin, middle domain"/>
    <property type="match status" value="1"/>
</dbReference>
<dbReference type="Gene3D" id="3.40.50.300">
    <property type="entry name" value="P-loop containing nucleotide triphosphate hydrolases"/>
    <property type="match status" value="1"/>
</dbReference>
<dbReference type="InterPro" id="IPR022812">
    <property type="entry name" value="Dynamin"/>
</dbReference>
<dbReference type="InterPro" id="IPR001401">
    <property type="entry name" value="Dynamin_GTPase"/>
</dbReference>
<dbReference type="InterPro" id="IPR019762">
    <property type="entry name" value="Dynamin_GTPase_CS"/>
</dbReference>
<dbReference type="InterPro" id="IPR045063">
    <property type="entry name" value="Dynamin_N"/>
</dbReference>
<dbReference type="InterPro" id="IPR000375">
    <property type="entry name" value="Dynamin_stalk"/>
</dbReference>
<dbReference type="InterPro" id="IPR030381">
    <property type="entry name" value="G_DYNAMIN_dom"/>
</dbReference>
<dbReference type="InterPro" id="IPR003130">
    <property type="entry name" value="GED"/>
</dbReference>
<dbReference type="InterPro" id="IPR020850">
    <property type="entry name" value="GED_dom"/>
</dbReference>
<dbReference type="InterPro" id="IPR027417">
    <property type="entry name" value="P-loop_NTPase"/>
</dbReference>
<dbReference type="PANTHER" id="PTHR11566">
    <property type="entry name" value="DYNAMIN"/>
    <property type="match status" value="1"/>
</dbReference>
<dbReference type="PANTHER" id="PTHR11566:SF80">
    <property type="entry name" value="PHRAGMOPLASTIN DRP1C"/>
    <property type="match status" value="1"/>
</dbReference>
<dbReference type="Pfam" id="PF01031">
    <property type="entry name" value="Dynamin_M"/>
    <property type="match status" value="1"/>
</dbReference>
<dbReference type="Pfam" id="PF00350">
    <property type="entry name" value="Dynamin_N"/>
    <property type="match status" value="1"/>
</dbReference>
<dbReference type="Pfam" id="PF02212">
    <property type="entry name" value="GED"/>
    <property type="match status" value="1"/>
</dbReference>
<dbReference type="PRINTS" id="PR00195">
    <property type="entry name" value="DYNAMIN"/>
</dbReference>
<dbReference type="SMART" id="SM00053">
    <property type="entry name" value="DYNc"/>
    <property type="match status" value="1"/>
</dbReference>
<dbReference type="SMART" id="SM00302">
    <property type="entry name" value="GED"/>
    <property type="match status" value="1"/>
</dbReference>
<dbReference type="SUPFAM" id="SSF52540">
    <property type="entry name" value="P-loop containing nucleoside triphosphate hydrolases"/>
    <property type="match status" value="1"/>
</dbReference>
<dbReference type="PROSITE" id="PS00410">
    <property type="entry name" value="G_DYNAMIN_1"/>
    <property type="match status" value="1"/>
</dbReference>
<dbReference type="PROSITE" id="PS51718">
    <property type="entry name" value="G_DYNAMIN_2"/>
    <property type="match status" value="1"/>
</dbReference>
<dbReference type="PROSITE" id="PS51388">
    <property type="entry name" value="GED"/>
    <property type="match status" value="1"/>
</dbReference>
<sequence length="614" mass="68723">MATMKSLIGLINKIQRACTVLGDHGGEGMSLWEALPTVAVVGGQSSGKSSVLESVVGRDFLPRGSGIVTRRPLVLQLHKTEDGTTEYAEFLHAPKKRFADFAAVRKEIEDETDRITGKSKQISNIPIQLSIYSPNVVNLTLIDLPGLTKVAVDGQPESIVQDIENMVRSYVEKPNCIILAISPANQDIATSDAIKLAREVDPTGERTFGVATKLDIMDKGTDCLDVLEGRSYRLQHPWVGIVNRSQADINKRVDMIAARRKEQEYFETSPEYGHLASRMGSEYLAKLLSQHLETVIRQKIPSIVALINKSIDEINAELDRIGRPIAVDSGAQLYTILELCRAFDRVFKEHLDGGRPGGDRIYGVFDHQLPAALKKLPFDRHLSTKNVQKVVSEADGYQPHLIAPEQGYRRLIDGSISYFKGPAEATVDAVHFVLKELVRKSISETEELKRFPTLASDIAAAANEALERFRDESRKTVLRLVDMESSYLTVEFFRKLHLEPEKEKPNPRNAPAPNADPYSDNHFRKIGSNVSAYINMVCDTLRNSLPKAVVYCQVREAKRSLLNFFYAQVGRKEKEKLGAMLDEDPQLMERRGTLAKRLELYKQARDDIDAVAWK</sequence>